<protein>
    <recommendedName>
        <fullName evidence="1">Urease accessory protein UreD 2</fullName>
    </recommendedName>
</protein>
<proteinExistence type="inferred from homology"/>
<accession>A6X1Q4</accession>
<comment type="function">
    <text evidence="1">Required for maturation of urease via the functional incorporation of the urease nickel metallocenter.</text>
</comment>
<comment type="subunit">
    <text evidence="1">UreD, UreF and UreG form a complex that acts as a GTP-hydrolysis-dependent molecular chaperone, activating the urease apoprotein by helping to assemble the nickel containing metallocenter of UreC. The UreE protein probably delivers the nickel.</text>
</comment>
<comment type="subcellular location">
    <subcellularLocation>
        <location evidence="1">Cytoplasm</location>
    </subcellularLocation>
</comment>
<comment type="similarity">
    <text evidence="1">Belongs to the UreD family.</text>
</comment>
<sequence>MSTGWHAELELRFEHNREVTRLMRRRHVGPLAVQQPFYPEKDGSAHVYLLHPPGGVAGDDVLDISCFLGRGARAVLTTPGATKFYRSERGQSTQTTRIDVGEGGICEYLPQETIVFDGAKASIGTKVFLSGDAVYLGWDIISLGRPACQESFDTGEVRQRIEIFRDGKPIWFEQFRLHGADPALNAAFAFCAKPIVATMVYAGPADESALHAIREAVGDAARNLFSVSRLERVIVCRYLGGRMSEAKTLFRKAWEVLRETGLGKPAAAPRIWAT</sequence>
<gene>
    <name evidence="1" type="primary">ureD2</name>
    <name type="ordered locus">Oant_2444</name>
</gene>
<name>URED2_BRUA4</name>
<feature type="chain" id="PRO_0000340469" description="Urease accessory protein UreD 2">
    <location>
        <begin position="1"/>
        <end position="274"/>
    </location>
</feature>
<dbReference type="EMBL" id="CP000758">
    <property type="protein sequence ID" value="ABS15158.1"/>
    <property type="molecule type" value="Genomic_DNA"/>
</dbReference>
<dbReference type="RefSeq" id="WP_012092276.1">
    <property type="nucleotide sequence ID" value="NC_009667.1"/>
</dbReference>
<dbReference type="SMR" id="A6X1Q4"/>
<dbReference type="STRING" id="439375.Oant_2444"/>
<dbReference type="KEGG" id="oan:Oant_2444"/>
<dbReference type="PATRIC" id="fig|439375.7.peg.2579"/>
<dbReference type="eggNOG" id="COG0829">
    <property type="taxonomic scope" value="Bacteria"/>
</dbReference>
<dbReference type="HOGENOM" id="CLU_056339_0_0_5"/>
<dbReference type="PhylomeDB" id="A6X1Q4"/>
<dbReference type="Proteomes" id="UP000002301">
    <property type="component" value="Chromosome 1"/>
</dbReference>
<dbReference type="GO" id="GO:0005737">
    <property type="term" value="C:cytoplasm"/>
    <property type="evidence" value="ECO:0007669"/>
    <property type="project" value="UniProtKB-SubCell"/>
</dbReference>
<dbReference type="GO" id="GO:0016151">
    <property type="term" value="F:nickel cation binding"/>
    <property type="evidence" value="ECO:0007669"/>
    <property type="project" value="UniProtKB-UniRule"/>
</dbReference>
<dbReference type="HAMAP" id="MF_01384">
    <property type="entry name" value="UreD"/>
    <property type="match status" value="1"/>
</dbReference>
<dbReference type="InterPro" id="IPR002669">
    <property type="entry name" value="UreD"/>
</dbReference>
<dbReference type="PANTHER" id="PTHR33643">
    <property type="entry name" value="UREASE ACCESSORY PROTEIN D"/>
    <property type="match status" value="1"/>
</dbReference>
<dbReference type="PANTHER" id="PTHR33643:SF1">
    <property type="entry name" value="UREASE ACCESSORY PROTEIN D"/>
    <property type="match status" value="1"/>
</dbReference>
<dbReference type="Pfam" id="PF01774">
    <property type="entry name" value="UreD"/>
    <property type="match status" value="1"/>
</dbReference>
<organism>
    <name type="scientific">Brucella anthropi (strain ATCC 49188 / DSM 6882 / CCUG 24695 / JCM 21032 / LMG 3331 / NBRC 15819 / NCTC 12168 / Alc 37)</name>
    <name type="common">Ochrobactrum anthropi</name>
    <dbReference type="NCBI Taxonomy" id="439375"/>
    <lineage>
        <taxon>Bacteria</taxon>
        <taxon>Pseudomonadati</taxon>
        <taxon>Pseudomonadota</taxon>
        <taxon>Alphaproteobacteria</taxon>
        <taxon>Hyphomicrobiales</taxon>
        <taxon>Brucellaceae</taxon>
        <taxon>Brucella/Ochrobactrum group</taxon>
        <taxon>Brucella</taxon>
    </lineage>
</organism>
<reference key="1">
    <citation type="journal article" date="2011" name="J. Bacteriol.">
        <title>Genome of Ochrobactrum anthropi ATCC 49188 T, a versatile opportunistic pathogen and symbiont of several eukaryotic hosts.</title>
        <authorList>
            <person name="Chain P.S."/>
            <person name="Lang D.M."/>
            <person name="Comerci D.J."/>
            <person name="Malfatti S.A."/>
            <person name="Vergez L.M."/>
            <person name="Shin M."/>
            <person name="Ugalde R.A."/>
            <person name="Garcia E."/>
            <person name="Tolmasky M.E."/>
        </authorList>
    </citation>
    <scope>NUCLEOTIDE SEQUENCE [LARGE SCALE GENOMIC DNA]</scope>
    <source>
        <strain>ATCC 49188 / DSM 6882 / CCUG 24695 / JCM 21032 / LMG 3331 / NBRC 15819 / NCTC 12168 / Alc 37</strain>
    </source>
</reference>
<keyword id="KW-0143">Chaperone</keyword>
<keyword id="KW-0963">Cytoplasm</keyword>
<keyword id="KW-0996">Nickel insertion</keyword>
<keyword id="KW-1185">Reference proteome</keyword>
<evidence type="ECO:0000255" key="1">
    <source>
        <dbReference type="HAMAP-Rule" id="MF_01384"/>
    </source>
</evidence>